<keyword id="KW-0249">Electron transport</keyword>
<keyword id="KW-0274">FAD</keyword>
<keyword id="KW-0285">Flavoprotein</keyword>
<keyword id="KW-0288">FMN</keyword>
<keyword id="KW-0349">Heme</keyword>
<keyword id="KW-0408">Iron</keyword>
<keyword id="KW-0479">Metal-binding</keyword>
<keyword id="KW-0503">Monooxygenase</keyword>
<keyword id="KW-0521">NADP</keyword>
<keyword id="KW-0560">Oxidoreductase</keyword>
<keyword id="KW-0813">Transport</keyword>
<evidence type="ECO:0000250" key="1">
    <source>
        <dbReference type="UniProtKB" id="P14779"/>
    </source>
</evidence>
<evidence type="ECO:0000250" key="2">
    <source>
        <dbReference type="UniProtKB" id="Q9Y8G7"/>
    </source>
</evidence>
<evidence type="ECO:0000255" key="3">
    <source>
        <dbReference type="PROSITE-ProRule" id="PRU00088"/>
    </source>
</evidence>
<evidence type="ECO:0000255" key="4">
    <source>
        <dbReference type="PROSITE-ProRule" id="PRU00716"/>
    </source>
</evidence>
<evidence type="ECO:0000256" key="5">
    <source>
        <dbReference type="SAM" id="MobiDB-lite"/>
    </source>
</evidence>
<evidence type="ECO:0000269" key="6">
    <source>
    </source>
</evidence>
<evidence type="ECO:0000303" key="7">
    <source>
    </source>
</evidence>
<evidence type="ECO:0000305" key="8"/>
<sequence length="1050" mass="116275">MKDAERIPGPKPLPVVGNLLDIDPEHGLQSIIAFADKYGPLFQITINGEKQIFATSQALVDELCDESRFHKAVVTGLEVLRLLAHDGLFTAYHGERGWGIAHRILVPAFGPLRIRNMLDDMSDVAQQLCLKWARQGGSTSINITEDFTRLTLDTIALCTMGFRLNSFYNNETMHPFVQSMLYVLKEADVQANLPGIANSIRVSAQRRMHKNIEAMRTMARGIIQERRKNKNPVDDILNTLLNGRDPVTGEGMSDDSIIDNVITFLIAGHETTSGLLSFTFYFLIQHPHILKKAQEEVDETVGLAQISAQHLAELPYIDAILKESLRLMPTAPGFAVTPKKTEVLGGKWMINAGQPVNVLLPACLRDQSVFGPDADEFHPERMLAENFSKLPPNSWKPFGNGERGCIGRAFAWQEAQLVVAMILQTFDLVPDDPSYQLRIKETLTIKPDGFRIRALLRRGQTATGLSRRSMLVARDGSSGESSNHLAEARGDHAPARGQPVSFFYGSNSGTCKALAHQLASNMMSRGYTTQKLAPLDNAVGNLPRDQPVIILTTTYDGQPTDDAKKFVAWLETGNVPSLQGISYAVFGCGHHDWTQTFYRIPILIDDLMHKAGATRLAPRGAANAAVSDLFSDLEAWEETSLLPALRENFLPSNSTDFDPLNPHQIQLSLSKPRRVDLHKGLIEAKVTAVRVLTSPDTPEKRHLEFCFQGDTSLRPGDHLNILPVNPPSTVSRVLAQFNLAPDYNITVNSFNTLGLPQATPVSASELFSSYVELCQPATRNNLKALIAATQSDPDKQELNRLYDSYEFIVRDKRVSVLDLLEQFPSISLPIAAFISMLPALRVRTYSLSMAPSFKPSHSSLTFSVINEPAWRGSGQHLGVASNYLASLTSGSIFYFSPRPAKESFHLPKDPSNTPIIMICAGSGLAPFLSFIQDRMVLKQQYKPLAKAFLFFGCRGRSLDDLYHEELSEFEAAGVVEIRRAYSKTPDFDIAKGCRYVQHRLVTEGQAILSLWSQNATIYVCGSTNMAKGVEAVLQNMLGPLPKERYVTEIF</sequence>
<protein>
    <recommendedName>
        <fullName evidence="7">Self-sufficient cytochrome P450 monooxygenase CYP505E5</fullName>
    </recommendedName>
    <alternativeName>
        <fullName evidence="7">Bifunctional cytochrome P450/NADPH--P450 reductase CYP505E5</fullName>
    </alternativeName>
    <domain>
        <recommendedName>
            <fullName evidence="7">Cytochrome P450 monooxygenase</fullName>
            <ecNumber evidence="6">1.14.14.1</ecNumber>
        </recommendedName>
    </domain>
    <domain>
        <recommendedName>
            <fullName evidence="7">NADPH--cytochrome P450 reductase</fullName>
            <ecNumber evidence="6">1.6.2.4</ecNumber>
        </recommendedName>
    </domain>
</protein>
<proteinExistence type="evidence at protein level"/>
<organism>
    <name type="scientific">Aspergillus niger</name>
    <dbReference type="NCBI Taxonomy" id="5061"/>
    <lineage>
        <taxon>Eukaryota</taxon>
        <taxon>Fungi</taxon>
        <taxon>Dikarya</taxon>
        <taxon>Ascomycota</taxon>
        <taxon>Pezizomycotina</taxon>
        <taxon>Eurotiomycetes</taxon>
        <taxon>Eurotiomycetidae</taxon>
        <taxon>Eurotiales</taxon>
        <taxon>Aspergillaceae</taxon>
        <taxon>Aspergillus</taxon>
        <taxon>Aspergillus subgen. Circumdati</taxon>
    </lineage>
</organism>
<accession>A0A100IM63</accession>
<reference key="1">
    <citation type="journal article" date="2016" name="Genome Announc.">
        <title>Draft genome sequence of Aspergillus niger strain An76.</title>
        <authorList>
            <person name="Gong W."/>
            <person name="Cheng Z."/>
            <person name="Zhang H."/>
            <person name="Liu L."/>
            <person name="Gao P."/>
            <person name="Wang L."/>
        </authorList>
    </citation>
    <scope>NUCLEOTIDE SEQUENCE [LARGE SCALE GENOMIC DNA]</scope>
    <source>
        <strain>An76</strain>
    </source>
</reference>
<reference key="2">
    <citation type="journal article" date="2023" name="Appl. Microbiol. Biotechnol.">
        <title>Delineation of the CYP505E subfamily of fungal self-sufficient in-chain hydroxylating cytochrome P450 monooxygenases.</title>
        <authorList>
            <person name="Smit M.S."/>
            <person name="Maseme M.J."/>
            <person name="van Marwijk J."/>
            <person name="Aschenbrenner J.C."/>
            <person name="Opperman D.J."/>
        </authorList>
    </citation>
    <scope>FUNCTION</scope>
    <scope>CATALYTIC ACTIVITY</scope>
</reference>
<feature type="chain" id="PRO_0000459038" description="Self-sufficient cytochrome P450 monooxygenase CYP505E5">
    <location>
        <begin position="1"/>
        <end position="1050"/>
    </location>
</feature>
<feature type="domain" description="Flavodoxin-like" evidence="3">
    <location>
        <begin position="500"/>
        <end position="641"/>
    </location>
</feature>
<feature type="domain" description="FAD-binding FR-type" evidence="4">
    <location>
        <begin position="679"/>
        <end position="907"/>
    </location>
</feature>
<feature type="region of interest" description="Disordered" evidence="5">
    <location>
        <begin position="467"/>
        <end position="491"/>
    </location>
</feature>
<feature type="binding site" description="axial binding residue" evidence="1">
    <location>
        <position position="405"/>
    </location>
    <ligand>
        <name>heme</name>
        <dbReference type="ChEBI" id="CHEBI:30413"/>
    </ligand>
    <ligandPart>
        <name>Fe</name>
        <dbReference type="ChEBI" id="CHEBI:18248"/>
    </ligandPart>
</feature>
<feature type="binding site" evidence="3">
    <location>
        <begin position="506"/>
        <end position="510"/>
    </location>
    <ligand>
        <name>FMN</name>
        <dbReference type="ChEBI" id="CHEBI:58210"/>
    </ligand>
</feature>
<feature type="binding site" evidence="3">
    <location>
        <begin position="585"/>
        <end position="617"/>
    </location>
    <ligand>
        <name>FMN</name>
        <dbReference type="ChEBI" id="CHEBI:58210"/>
    </ligand>
</feature>
<gene>
    <name evidence="7" type="primary">CYP505E5</name>
    <name type="ORF">ABL_06430</name>
</gene>
<comment type="function">
    <text evidence="6">Self-sufficient cytochrome P450 monooxygenase that catalyzes the regioselective in-chain hydroxylation of alkanes, fatty alcohols, and fatty acids at the omega-7 position (PubMed:36607403). Performs hydroxylation of C10-C16 n-alkanes and C12 and C14 fatty alcohols; and thereby enables the one step biocatalytic synthesis of rare alcohols such as 5-dodecanol and 7-tetradecanol (PubMed:36607403). Converts 1-dodecanol into 1,5-dodecanediol as major product with very little sub-terminally hydroxylated products with the 1,4-dodecanediol and 1,6-dodecanediol more abundant (PubMed:36607403). Converts dodecanoic acid to 5-hydroxydodecanoic acid which can be further converted into delta-dodecalactone by lactonization of the 5-hydroxy acid at low pH (PubMed:36607403). Also gives sub-terminal hydroxylation of dodecanoic acid with 9-hydroxydodecanoic acid being the second most abundant product (PubMed:36607403).</text>
</comment>
<comment type="catalytic activity">
    <reaction evidence="6">
        <text>2 oxidized [cytochrome P450] + NADPH = 2 reduced [cytochrome P450] + NADP(+) + H(+)</text>
        <dbReference type="Rhea" id="RHEA:24040"/>
        <dbReference type="Rhea" id="RHEA-COMP:14627"/>
        <dbReference type="Rhea" id="RHEA-COMP:14628"/>
        <dbReference type="ChEBI" id="CHEBI:15378"/>
        <dbReference type="ChEBI" id="CHEBI:55376"/>
        <dbReference type="ChEBI" id="CHEBI:57783"/>
        <dbReference type="ChEBI" id="CHEBI:58349"/>
        <dbReference type="ChEBI" id="CHEBI:60344"/>
        <dbReference type="EC" id="1.6.2.4"/>
    </reaction>
</comment>
<comment type="catalytic activity">
    <reaction evidence="6">
        <text>an organic molecule + reduced [NADPH--hemoprotein reductase] + O2 = an alcohol + oxidized [NADPH--hemoprotein reductase] + H2O + H(+)</text>
        <dbReference type="Rhea" id="RHEA:17149"/>
        <dbReference type="Rhea" id="RHEA-COMP:11964"/>
        <dbReference type="Rhea" id="RHEA-COMP:11965"/>
        <dbReference type="ChEBI" id="CHEBI:15377"/>
        <dbReference type="ChEBI" id="CHEBI:15378"/>
        <dbReference type="ChEBI" id="CHEBI:15379"/>
        <dbReference type="ChEBI" id="CHEBI:30879"/>
        <dbReference type="ChEBI" id="CHEBI:57618"/>
        <dbReference type="ChEBI" id="CHEBI:58210"/>
        <dbReference type="ChEBI" id="CHEBI:142491"/>
        <dbReference type="EC" id="1.14.14.1"/>
    </reaction>
</comment>
<comment type="catalytic activity">
    <reaction evidence="6">
        <text>dodecanoate + reduced [NADPH--hemoprotein reductase] + O2 = 5-hydroxydodecanoate + oxidized [NADPH--hemoprotein reductase] + H2O + H(+)</text>
        <dbReference type="Rhea" id="RHEA:76723"/>
        <dbReference type="Rhea" id="RHEA-COMP:11964"/>
        <dbReference type="Rhea" id="RHEA-COMP:11965"/>
        <dbReference type="ChEBI" id="CHEBI:15377"/>
        <dbReference type="ChEBI" id="CHEBI:15378"/>
        <dbReference type="ChEBI" id="CHEBI:15379"/>
        <dbReference type="ChEBI" id="CHEBI:18262"/>
        <dbReference type="ChEBI" id="CHEBI:57618"/>
        <dbReference type="ChEBI" id="CHEBI:58210"/>
        <dbReference type="ChEBI" id="CHEBI:195418"/>
    </reaction>
    <physiologicalReaction direction="left-to-right" evidence="6">
        <dbReference type="Rhea" id="RHEA:76724"/>
    </physiologicalReaction>
</comment>
<comment type="catalytic activity">
    <reaction evidence="6">
        <text>tetradecanoate + reduced [NADPH--hemoprotein reductase] + O2 = 7-hydroxytetradecanoate + oxidized [NADPH--hemoprotein reductase] + H2O + H(+)</text>
        <dbReference type="Rhea" id="RHEA:76727"/>
        <dbReference type="Rhea" id="RHEA-COMP:11964"/>
        <dbReference type="Rhea" id="RHEA-COMP:11965"/>
        <dbReference type="ChEBI" id="CHEBI:15377"/>
        <dbReference type="ChEBI" id="CHEBI:15378"/>
        <dbReference type="ChEBI" id="CHEBI:15379"/>
        <dbReference type="ChEBI" id="CHEBI:30807"/>
        <dbReference type="ChEBI" id="CHEBI:57618"/>
        <dbReference type="ChEBI" id="CHEBI:58210"/>
        <dbReference type="ChEBI" id="CHEBI:195419"/>
    </reaction>
    <physiologicalReaction direction="left-to-right" evidence="6">
        <dbReference type="Rhea" id="RHEA:76728"/>
    </physiologicalReaction>
</comment>
<comment type="catalytic activity">
    <reaction evidence="6">
        <text>dodecan-1-ol + reduced [NADPH--hemoprotein reductase] + O2 = 1,5-dodecanediol + oxidized [NADPH--hemoprotein reductase] + H2O + H(+)</text>
        <dbReference type="Rhea" id="RHEA:76759"/>
        <dbReference type="Rhea" id="RHEA-COMP:11964"/>
        <dbReference type="Rhea" id="RHEA-COMP:11965"/>
        <dbReference type="ChEBI" id="CHEBI:15377"/>
        <dbReference type="ChEBI" id="CHEBI:15378"/>
        <dbReference type="ChEBI" id="CHEBI:15379"/>
        <dbReference type="ChEBI" id="CHEBI:28878"/>
        <dbReference type="ChEBI" id="CHEBI:57618"/>
        <dbReference type="ChEBI" id="CHEBI:58210"/>
        <dbReference type="ChEBI" id="CHEBI:195414"/>
    </reaction>
    <physiologicalReaction direction="left-to-right" evidence="6">
        <dbReference type="Rhea" id="RHEA:76760"/>
    </physiologicalReaction>
</comment>
<comment type="catalytic activity">
    <reaction evidence="6">
        <text>dodecan-1-ol + reduced [NADPH--hemoprotein reductase] + O2 = 1,4-dodecanediol + oxidized [NADPH--hemoprotein reductase] + H2O + H(+)</text>
        <dbReference type="Rhea" id="RHEA:76763"/>
        <dbReference type="Rhea" id="RHEA-COMP:11964"/>
        <dbReference type="Rhea" id="RHEA-COMP:11965"/>
        <dbReference type="ChEBI" id="CHEBI:15377"/>
        <dbReference type="ChEBI" id="CHEBI:15378"/>
        <dbReference type="ChEBI" id="CHEBI:15379"/>
        <dbReference type="ChEBI" id="CHEBI:28878"/>
        <dbReference type="ChEBI" id="CHEBI:57618"/>
        <dbReference type="ChEBI" id="CHEBI:58210"/>
        <dbReference type="ChEBI" id="CHEBI:195422"/>
    </reaction>
    <physiologicalReaction direction="left-to-right" evidence="6">
        <dbReference type="Rhea" id="RHEA:76764"/>
    </physiologicalReaction>
</comment>
<comment type="catalytic activity">
    <reaction evidence="6">
        <text>dodecan-1-ol + reduced [NADPH--hemoprotein reductase] + O2 = 1,6-dodecanediol + oxidized [NADPH--hemoprotein reductase] + H2O + H(+)</text>
        <dbReference type="Rhea" id="RHEA:76779"/>
        <dbReference type="Rhea" id="RHEA-COMP:11964"/>
        <dbReference type="Rhea" id="RHEA-COMP:11965"/>
        <dbReference type="ChEBI" id="CHEBI:15377"/>
        <dbReference type="ChEBI" id="CHEBI:15378"/>
        <dbReference type="ChEBI" id="CHEBI:15379"/>
        <dbReference type="ChEBI" id="CHEBI:28878"/>
        <dbReference type="ChEBI" id="CHEBI:57618"/>
        <dbReference type="ChEBI" id="CHEBI:58210"/>
        <dbReference type="ChEBI" id="CHEBI:195445"/>
    </reaction>
    <physiologicalReaction direction="left-to-right" evidence="6">
        <dbReference type="Rhea" id="RHEA:76780"/>
    </physiologicalReaction>
</comment>
<comment type="cofactor">
    <cofactor evidence="2">
        <name>FAD</name>
        <dbReference type="ChEBI" id="CHEBI:57692"/>
    </cofactor>
    <text evidence="2">Binds 1 FAD.</text>
</comment>
<comment type="cofactor">
    <cofactor evidence="2">
        <name>FMN</name>
        <dbReference type="ChEBI" id="CHEBI:58210"/>
    </cofactor>
    <text evidence="2">Binds 1 FMN.</text>
</comment>
<comment type="cofactor">
    <cofactor evidence="2">
        <name>heme</name>
        <dbReference type="ChEBI" id="CHEBI:30413"/>
    </cofactor>
</comment>
<comment type="similarity">
    <text evidence="8">In the N-terminal section; belongs to the cytochrome P450 family.</text>
</comment>
<dbReference type="EC" id="1.14.14.1" evidence="6"/>
<dbReference type="EC" id="1.6.2.4" evidence="6"/>
<dbReference type="EMBL" id="BCMY01000010">
    <property type="protein sequence ID" value="GAQ43769.1"/>
    <property type="molecule type" value="Genomic_DNA"/>
</dbReference>
<dbReference type="SMR" id="A0A100IM63"/>
<dbReference type="VEuPathDB" id="FungiDB:An06g02530"/>
<dbReference type="VEuPathDB" id="FungiDB:ASPNIDRAFT2_1155563"/>
<dbReference type="VEuPathDB" id="FungiDB:ATCC64974_96010"/>
<dbReference type="VEuPathDB" id="FungiDB:M747DRAFT_287186"/>
<dbReference type="OMA" id="LCTMGFR"/>
<dbReference type="OrthoDB" id="1470350at2759"/>
<dbReference type="Proteomes" id="UP000068243">
    <property type="component" value="Unassembled WGS sequence"/>
</dbReference>
<dbReference type="GO" id="GO:0005829">
    <property type="term" value="C:cytosol"/>
    <property type="evidence" value="ECO:0007669"/>
    <property type="project" value="TreeGrafter"/>
</dbReference>
<dbReference type="GO" id="GO:0070330">
    <property type="term" value="F:aromatase activity"/>
    <property type="evidence" value="ECO:0007669"/>
    <property type="project" value="InterPro"/>
</dbReference>
<dbReference type="GO" id="GO:0050660">
    <property type="term" value="F:flavin adenine dinucleotide binding"/>
    <property type="evidence" value="ECO:0007669"/>
    <property type="project" value="TreeGrafter"/>
</dbReference>
<dbReference type="GO" id="GO:0010181">
    <property type="term" value="F:FMN binding"/>
    <property type="evidence" value="ECO:0007669"/>
    <property type="project" value="InterPro"/>
</dbReference>
<dbReference type="GO" id="GO:0020037">
    <property type="term" value="F:heme binding"/>
    <property type="evidence" value="ECO:0007669"/>
    <property type="project" value="InterPro"/>
</dbReference>
<dbReference type="GO" id="GO:0005506">
    <property type="term" value="F:iron ion binding"/>
    <property type="evidence" value="ECO:0007669"/>
    <property type="project" value="InterPro"/>
</dbReference>
<dbReference type="GO" id="GO:0003958">
    <property type="term" value="F:NADPH-hemoprotein reductase activity"/>
    <property type="evidence" value="ECO:0007669"/>
    <property type="project" value="UniProtKB-EC"/>
</dbReference>
<dbReference type="CDD" id="cd06206">
    <property type="entry name" value="bifunctional_CYPOR"/>
    <property type="match status" value="1"/>
</dbReference>
<dbReference type="CDD" id="cd11068">
    <property type="entry name" value="CYP120A1"/>
    <property type="match status" value="1"/>
</dbReference>
<dbReference type="FunFam" id="1.10.630.10:FF:000040">
    <property type="entry name" value="Bifunctional cytochrome P450/NADPH--P450 reductase"/>
    <property type="match status" value="1"/>
</dbReference>
<dbReference type="Gene3D" id="3.40.50.360">
    <property type="match status" value="1"/>
</dbReference>
<dbReference type="Gene3D" id="1.10.630.10">
    <property type="entry name" value="Cytochrome P450"/>
    <property type="match status" value="1"/>
</dbReference>
<dbReference type="Gene3D" id="1.20.990.10">
    <property type="entry name" value="NADPH-cytochrome p450 Reductase, Chain A, domain 3"/>
    <property type="match status" value="1"/>
</dbReference>
<dbReference type="Gene3D" id="3.40.50.80">
    <property type="entry name" value="Nucleotide-binding domain of ferredoxin-NADP reductase (FNR) module"/>
    <property type="match status" value="1"/>
</dbReference>
<dbReference type="Gene3D" id="2.40.30.10">
    <property type="entry name" value="Translation factors"/>
    <property type="match status" value="1"/>
</dbReference>
<dbReference type="InterPro" id="IPR023206">
    <property type="entry name" value="Bifunctional_P450_P450_red"/>
</dbReference>
<dbReference type="InterPro" id="IPR003097">
    <property type="entry name" value="CysJ-like_FAD-binding"/>
</dbReference>
<dbReference type="InterPro" id="IPR001128">
    <property type="entry name" value="Cyt_P450"/>
</dbReference>
<dbReference type="InterPro" id="IPR017972">
    <property type="entry name" value="Cyt_P450_CS"/>
</dbReference>
<dbReference type="InterPro" id="IPR002401">
    <property type="entry name" value="Cyt_P450_E_grp-I"/>
</dbReference>
<dbReference type="InterPro" id="IPR036396">
    <property type="entry name" value="Cyt_P450_sf"/>
</dbReference>
<dbReference type="InterPro" id="IPR017927">
    <property type="entry name" value="FAD-bd_FR_type"/>
</dbReference>
<dbReference type="InterPro" id="IPR008254">
    <property type="entry name" value="Flavodoxin/NO_synth"/>
</dbReference>
<dbReference type="InterPro" id="IPR029039">
    <property type="entry name" value="Flavoprotein-like_sf"/>
</dbReference>
<dbReference type="InterPro" id="IPR039261">
    <property type="entry name" value="FNR_nucleotide-bd"/>
</dbReference>
<dbReference type="InterPro" id="IPR023173">
    <property type="entry name" value="NADPH_Cyt_P450_Rdtase_alpha"/>
</dbReference>
<dbReference type="InterPro" id="IPR001433">
    <property type="entry name" value="OxRdtase_FAD/NAD-bd"/>
</dbReference>
<dbReference type="InterPro" id="IPR017938">
    <property type="entry name" value="Riboflavin_synthase-like_b-brl"/>
</dbReference>
<dbReference type="PANTHER" id="PTHR19384:SF127">
    <property type="entry name" value="BIFUNCTIONAL CYTOCHROME P450_NADPH--P450 REDUCTASE"/>
    <property type="match status" value="1"/>
</dbReference>
<dbReference type="PANTHER" id="PTHR19384">
    <property type="entry name" value="NITRIC OXIDE SYNTHASE-RELATED"/>
    <property type="match status" value="1"/>
</dbReference>
<dbReference type="Pfam" id="PF00667">
    <property type="entry name" value="FAD_binding_1"/>
    <property type="match status" value="1"/>
</dbReference>
<dbReference type="Pfam" id="PF00258">
    <property type="entry name" value="Flavodoxin_1"/>
    <property type="match status" value="1"/>
</dbReference>
<dbReference type="Pfam" id="PF00175">
    <property type="entry name" value="NAD_binding_1"/>
    <property type="match status" value="1"/>
</dbReference>
<dbReference type="Pfam" id="PF00067">
    <property type="entry name" value="p450"/>
    <property type="match status" value="1"/>
</dbReference>
<dbReference type="PIRSF" id="PIRSF000209">
    <property type="entry name" value="Bifunctional_P450_P450R"/>
    <property type="match status" value="1"/>
</dbReference>
<dbReference type="PRINTS" id="PR00463">
    <property type="entry name" value="EP450I"/>
</dbReference>
<dbReference type="PRINTS" id="PR00385">
    <property type="entry name" value="P450"/>
</dbReference>
<dbReference type="SUPFAM" id="SSF48264">
    <property type="entry name" value="Cytochrome P450"/>
    <property type="match status" value="1"/>
</dbReference>
<dbReference type="SUPFAM" id="SSF52343">
    <property type="entry name" value="Ferredoxin reductase-like, C-terminal NADP-linked domain"/>
    <property type="match status" value="1"/>
</dbReference>
<dbReference type="SUPFAM" id="SSF52218">
    <property type="entry name" value="Flavoproteins"/>
    <property type="match status" value="1"/>
</dbReference>
<dbReference type="SUPFAM" id="SSF63380">
    <property type="entry name" value="Riboflavin synthase domain-like"/>
    <property type="match status" value="1"/>
</dbReference>
<dbReference type="PROSITE" id="PS00086">
    <property type="entry name" value="CYTOCHROME_P450"/>
    <property type="match status" value="1"/>
</dbReference>
<dbReference type="PROSITE" id="PS51384">
    <property type="entry name" value="FAD_FR"/>
    <property type="match status" value="1"/>
</dbReference>
<dbReference type="PROSITE" id="PS50902">
    <property type="entry name" value="FLAVODOXIN_LIKE"/>
    <property type="match status" value="1"/>
</dbReference>
<name>CYPE5_ASPNG</name>